<gene>
    <name evidence="1" type="primary">tsf</name>
    <name type="ordered locus">Dred_1977</name>
</gene>
<feature type="chain" id="PRO_0000323452" description="Elongation factor Ts">
    <location>
        <begin position="1"/>
        <end position="217"/>
    </location>
</feature>
<feature type="region of interest" description="Involved in Mg(2+) ion dislocation from EF-Tu" evidence="1">
    <location>
        <begin position="82"/>
        <end position="85"/>
    </location>
</feature>
<proteinExistence type="inferred from homology"/>
<organism>
    <name type="scientific">Desulforamulus reducens (strain ATCC BAA-1160 / DSM 100696 / MI-1)</name>
    <name type="common">Desulfotomaculum reducens</name>
    <dbReference type="NCBI Taxonomy" id="349161"/>
    <lineage>
        <taxon>Bacteria</taxon>
        <taxon>Bacillati</taxon>
        <taxon>Bacillota</taxon>
        <taxon>Clostridia</taxon>
        <taxon>Eubacteriales</taxon>
        <taxon>Peptococcaceae</taxon>
        <taxon>Desulforamulus</taxon>
    </lineage>
</organism>
<sequence>MAEISASMVKELRERTGAGMMDCKKALAEVGGDMEKAIEFLREKGLAAAAKKAGRIAAEGVVESYIHGGGRIGVLVEINCETDFVAKNEDFRGLAKDIAMQIAAAKPEFVRREEVSADKIEKEKEILRAQALNEGKPEKIVEKMVEGRIEKFYKEVCLLEQPFIKDSDKTVQQVINEIIAKIGEKVDVRRFVRYEMGEGLEKRQDDFAAEVAAQIKA</sequence>
<name>EFTS_DESRM</name>
<evidence type="ECO:0000255" key="1">
    <source>
        <dbReference type="HAMAP-Rule" id="MF_00050"/>
    </source>
</evidence>
<accession>A4J5Z2</accession>
<keyword id="KW-0963">Cytoplasm</keyword>
<keyword id="KW-0251">Elongation factor</keyword>
<keyword id="KW-0648">Protein biosynthesis</keyword>
<keyword id="KW-1185">Reference proteome</keyword>
<dbReference type="EMBL" id="CP000612">
    <property type="protein sequence ID" value="ABO50495.1"/>
    <property type="molecule type" value="Genomic_DNA"/>
</dbReference>
<dbReference type="RefSeq" id="WP_011878305.1">
    <property type="nucleotide sequence ID" value="NC_009253.1"/>
</dbReference>
<dbReference type="SMR" id="A4J5Z2"/>
<dbReference type="STRING" id="349161.Dred_1977"/>
<dbReference type="KEGG" id="drm:Dred_1977"/>
<dbReference type="eggNOG" id="COG0264">
    <property type="taxonomic scope" value="Bacteria"/>
</dbReference>
<dbReference type="HOGENOM" id="CLU_047155_1_1_9"/>
<dbReference type="OrthoDB" id="9808348at2"/>
<dbReference type="Proteomes" id="UP000001556">
    <property type="component" value="Chromosome"/>
</dbReference>
<dbReference type="GO" id="GO:0005737">
    <property type="term" value="C:cytoplasm"/>
    <property type="evidence" value="ECO:0007669"/>
    <property type="project" value="UniProtKB-SubCell"/>
</dbReference>
<dbReference type="GO" id="GO:0003746">
    <property type="term" value="F:translation elongation factor activity"/>
    <property type="evidence" value="ECO:0007669"/>
    <property type="project" value="UniProtKB-UniRule"/>
</dbReference>
<dbReference type="CDD" id="cd14275">
    <property type="entry name" value="UBA_EF-Ts"/>
    <property type="match status" value="1"/>
</dbReference>
<dbReference type="FunFam" id="1.10.286.20:FF:000001">
    <property type="entry name" value="Elongation factor Ts"/>
    <property type="match status" value="1"/>
</dbReference>
<dbReference type="FunFam" id="1.10.8.10:FF:000001">
    <property type="entry name" value="Elongation factor Ts"/>
    <property type="match status" value="1"/>
</dbReference>
<dbReference type="Gene3D" id="1.10.286.20">
    <property type="match status" value="1"/>
</dbReference>
<dbReference type="Gene3D" id="1.10.8.10">
    <property type="entry name" value="DNA helicase RuvA subunit, C-terminal domain"/>
    <property type="match status" value="1"/>
</dbReference>
<dbReference type="Gene3D" id="3.30.479.20">
    <property type="entry name" value="Elongation factor Ts, dimerisation domain"/>
    <property type="match status" value="1"/>
</dbReference>
<dbReference type="HAMAP" id="MF_00050">
    <property type="entry name" value="EF_Ts"/>
    <property type="match status" value="1"/>
</dbReference>
<dbReference type="InterPro" id="IPR036402">
    <property type="entry name" value="EF-Ts_dimer_sf"/>
</dbReference>
<dbReference type="InterPro" id="IPR001816">
    <property type="entry name" value="Transl_elong_EFTs/EF1B"/>
</dbReference>
<dbReference type="InterPro" id="IPR014039">
    <property type="entry name" value="Transl_elong_EFTs/EF1B_dimer"/>
</dbReference>
<dbReference type="InterPro" id="IPR018101">
    <property type="entry name" value="Transl_elong_Ts_CS"/>
</dbReference>
<dbReference type="InterPro" id="IPR009060">
    <property type="entry name" value="UBA-like_sf"/>
</dbReference>
<dbReference type="NCBIfam" id="TIGR00116">
    <property type="entry name" value="tsf"/>
    <property type="match status" value="2"/>
</dbReference>
<dbReference type="PANTHER" id="PTHR11741">
    <property type="entry name" value="ELONGATION FACTOR TS"/>
    <property type="match status" value="1"/>
</dbReference>
<dbReference type="PANTHER" id="PTHR11741:SF0">
    <property type="entry name" value="ELONGATION FACTOR TS, MITOCHONDRIAL"/>
    <property type="match status" value="1"/>
</dbReference>
<dbReference type="Pfam" id="PF00889">
    <property type="entry name" value="EF_TS"/>
    <property type="match status" value="1"/>
</dbReference>
<dbReference type="SUPFAM" id="SSF54713">
    <property type="entry name" value="Elongation factor Ts (EF-Ts), dimerisation domain"/>
    <property type="match status" value="1"/>
</dbReference>
<dbReference type="SUPFAM" id="SSF46934">
    <property type="entry name" value="UBA-like"/>
    <property type="match status" value="1"/>
</dbReference>
<dbReference type="PROSITE" id="PS01126">
    <property type="entry name" value="EF_TS_1"/>
    <property type="match status" value="1"/>
</dbReference>
<dbReference type="PROSITE" id="PS01127">
    <property type="entry name" value="EF_TS_2"/>
    <property type="match status" value="1"/>
</dbReference>
<comment type="function">
    <text evidence="1">Associates with the EF-Tu.GDP complex and induces the exchange of GDP to GTP. It remains bound to the aminoacyl-tRNA.EF-Tu.GTP complex up to the GTP hydrolysis stage on the ribosome.</text>
</comment>
<comment type="subcellular location">
    <subcellularLocation>
        <location evidence="1">Cytoplasm</location>
    </subcellularLocation>
</comment>
<comment type="similarity">
    <text evidence="1">Belongs to the EF-Ts family.</text>
</comment>
<reference key="1">
    <citation type="submission" date="2007-03" db="EMBL/GenBank/DDBJ databases">
        <title>Complete sequence of Desulfotomaculum reducens MI-1.</title>
        <authorList>
            <consortium name="US DOE Joint Genome Institute"/>
            <person name="Copeland A."/>
            <person name="Lucas S."/>
            <person name="Lapidus A."/>
            <person name="Barry K."/>
            <person name="Detter J.C."/>
            <person name="Glavina del Rio T."/>
            <person name="Hammon N."/>
            <person name="Israni S."/>
            <person name="Dalin E."/>
            <person name="Tice H."/>
            <person name="Pitluck S."/>
            <person name="Sims D."/>
            <person name="Brettin T."/>
            <person name="Bruce D."/>
            <person name="Han C."/>
            <person name="Tapia R."/>
            <person name="Schmutz J."/>
            <person name="Larimer F."/>
            <person name="Land M."/>
            <person name="Hauser L."/>
            <person name="Kyrpides N."/>
            <person name="Kim E."/>
            <person name="Tebo B.M."/>
            <person name="Richardson P."/>
        </authorList>
    </citation>
    <scope>NUCLEOTIDE SEQUENCE [LARGE SCALE GENOMIC DNA]</scope>
    <source>
        <strain>ATCC BAA-1160 / DSM 100696 / MI-1</strain>
    </source>
</reference>
<protein>
    <recommendedName>
        <fullName evidence="1">Elongation factor Ts</fullName>
        <shortName evidence="1">EF-Ts</shortName>
    </recommendedName>
</protein>